<dbReference type="EC" id="1.1.3.6" evidence="2"/>
<dbReference type="EC" id="5.3.3.1" evidence="2"/>
<dbReference type="EMBL" id="AE000516">
    <property type="protein sequence ID" value="AAK47855.1"/>
    <property type="molecule type" value="Genomic_DNA"/>
</dbReference>
<dbReference type="PIR" id="F70736">
    <property type="entry name" value="F70736"/>
</dbReference>
<dbReference type="RefSeq" id="WP_003418002.1">
    <property type="nucleotide sequence ID" value="NZ_KK341227.1"/>
</dbReference>
<dbReference type="SMR" id="P9WMV8"/>
<dbReference type="GeneID" id="45427405"/>
<dbReference type="KEGG" id="mtc:MT3517"/>
<dbReference type="PATRIC" id="fig|83331.31.peg.3775"/>
<dbReference type="HOGENOM" id="CLU_002483_2_0_11"/>
<dbReference type="UniPathway" id="UPA01058"/>
<dbReference type="Proteomes" id="UP000001020">
    <property type="component" value="Chromosome"/>
</dbReference>
<dbReference type="GO" id="GO:0005576">
    <property type="term" value="C:extracellular region"/>
    <property type="evidence" value="ECO:0007669"/>
    <property type="project" value="UniProtKB-SubCell"/>
</dbReference>
<dbReference type="GO" id="GO:0016995">
    <property type="term" value="F:cholesterol oxidase activity"/>
    <property type="evidence" value="ECO:0007669"/>
    <property type="project" value="UniProtKB-EC"/>
</dbReference>
<dbReference type="GO" id="GO:0050660">
    <property type="term" value="F:flavin adenine dinucleotide binding"/>
    <property type="evidence" value="ECO:0007669"/>
    <property type="project" value="InterPro"/>
</dbReference>
<dbReference type="GO" id="GO:0004769">
    <property type="term" value="F:steroid Delta-isomerase activity"/>
    <property type="evidence" value="ECO:0007669"/>
    <property type="project" value="UniProtKB-EC"/>
</dbReference>
<dbReference type="GO" id="GO:0006707">
    <property type="term" value="P:cholesterol catabolic process"/>
    <property type="evidence" value="ECO:0007669"/>
    <property type="project" value="UniProtKB-UniPathway"/>
</dbReference>
<dbReference type="FunFam" id="3.50.50.60:FF:000231">
    <property type="entry name" value="Cholesterol oxidase ChoD"/>
    <property type="match status" value="1"/>
</dbReference>
<dbReference type="FunFam" id="3.50.50.60:FF:000262">
    <property type="entry name" value="Cholesterol oxidase ChoD"/>
    <property type="match status" value="1"/>
</dbReference>
<dbReference type="FunFam" id="3.50.50.60:FF:000287">
    <property type="entry name" value="Cholesterol oxidase ChoD"/>
    <property type="match status" value="1"/>
</dbReference>
<dbReference type="Gene3D" id="3.50.50.60">
    <property type="entry name" value="FAD/NAD(P)-binding domain"/>
    <property type="match status" value="3"/>
</dbReference>
<dbReference type="InterPro" id="IPR052542">
    <property type="entry name" value="Cholesterol_Oxidase"/>
</dbReference>
<dbReference type="InterPro" id="IPR036188">
    <property type="entry name" value="FAD/NAD-bd_sf"/>
</dbReference>
<dbReference type="InterPro" id="IPR000172">
    <property type="entry name" value="GMC_OxRdtase_N"/>
</dbReference>
<dbReference type="InterPro" id="IPR007867">
    <property type="entry name" value="GMC_OxRtase_C"/>
</dbReference>
<dbReference type="PANTHER" id="PTHR47470">
    <property type="entry name" value="CHOLESTEROL OXIDASE"/>
    <property type="match status" value="1"/>
</dbReference>
<dbReference type="PANTHER" id="PTHR47470:SF1">
    <property type="entry name" value="FAD-DEPENDENT OXIDOREDUCTASE 2 FAD BINDING DOMAIN-CONTAINING PROTEIN"/>
    <property type="match status" value="1"/>
</dbReference>
<dbReference type="Pfam" id="PF05199">
    <property type="entry name" value="GMC_oxred_C"/>
    <property type="match status" value="1"/>
</dbReference>
<dbReference type="Pfam" id="PF00732">
    <property type="entry name" value="GMC_oxred_N"/>
    <property type="match status" value="1"/>
</dbReference>
<dbReference type="Pfam" id="PF13450">
    <property type="entry name" value="NAD_binding_8"/>
    <property type="match status" value="1"/>
</dbReference>
<dbReference type="SUPFAM" id="SSF51905">
    <property type="entry name" value="FAD/NAD(P)-binding domain"/>
    <property type="match status" value="1"/>
</dbReference>
<evidence type="ECO:0000250" key="1">
    <source>
        <dbReference type="UniProtKB" id="P12676"/>
    </source>
</evidence>
<evidence type="ECO:0000250" key="2">
    <source>
        <dbReference type="UniProtKB" id="P9WMV9"/>
    </source>
</evidence>
<evidence type="ECO:0000256" key="3">
    <source>
        <dbReference type="SAM" id="MobiDB-lite"/>
    </source>
</evidence>
<evidence type="ECO:0000305" key="4"/>
<proteinExistence type="inferred from homology"/>
<feature type="chain" id="PRO_0000427234" description="Cholesterol oxidase">
    <location>
        <begin position="1"/>
        <end position="578"/>
    </location>
</feature>
<feature type="region of interest" description="Disordered" evidence="3">
    <location>
        <begin position="529"/>
        <end position="551"/>
    </location>
</feature>
<feature type="compositionally biased region" description="Basic and acidic residues" evidence="3">
    <location>
        <begin position="533"/>
        <end position="546"/>
    </location>
</feature>
<feature type="active site" description="Proton acceptor" evidence="1">
    <location>
        <position position="470"/>
    </location>
</feature>
<feature type="binding site" evidence="1">
    <location>
        <position position="15"/>
    </location>
    <ligand>
        <name>FAD</name>
        <dbReference type="ChEBI" id="CHEBI:57692"/>
    </ligand>
</feature>
<feature type="binding site" evidence="1">
    <location>
        <position position="34"/>
    </location>
    <ligand>
        <name>FAD</name>
        <dbReference type="ChEBI" id="CHEBI:57692"/>
    </ligand>
</feature>
<feature type="binding site" evidence="1">
    <location>
        <position position="85"/>
    </location>
    <ligand>
        <name>FAD</name>
        <dbReference type="ChEBI" id="CHEBI:57692"/>
    </ligand>
</feature>
<feature type="binding site" evidence="1">
    <location>
        <position position="90"/>
    </location>
    <ligand>
        <name>FAD</name>
        <dbReference type="ChEBI" id="CHEBI:57692"/>
    </ligand>
</feature>
<feature type="binding site" evidence="1">
    <location>
        <position position="230"/>
    </location>
    <ligand>
        <name>FAD</name>
        <dbReference type="ChEBI" id="CHEBI:57692"/>
    </ligand>
</feature>
<feature type="binding site" evidence="1">
    <location>
        <position position="503"/>
    </location>
    <ligand>
        <name>FAD</name>
        <dbReference type="ChEBI" id="CHEBI:57692"/>
    </ligand>
</feature>
<name>CHOD_MYCTO</name>
<comment type="function">
    <text evidence="2">Bifunctional enzyme that catalyzes the oxidation and isomerization of cholesterol to cholestenone (cholest-4-en-3-one), an initial step in the cholesterol degradation process (By similarity). Contributes to virulence (By similarity).</text>
</comment>
<comment type="catalytic activity">
    <reaction evidence="2">
        <text>cholesterol + O2 = cholest-5-en-3-one + H2O2</text>
        <dbReference type="Rhea" id="RHEA:32183"/>
        <dbReference type="ChEBI" id="CHEBI:15379"/>
        <dbReference type="ChEBI" id="CHEBI:16113"/>
        <dbReference type="ChEBI" id="CHEBI:16240"/>
        <dbReference type="ChEBI" id="CHEBI:63906"/>
        <dbReference type="EC" id="1.1.3.6"/>
    </reaction>
    <physiologicalReaction direction="left-to-right" evidence="2">
        <dbReference type="Rhea" id="RHEA:32184"/>
    </physiologicalReaction>
</comment>
<comment type="catalytic activity">
    <reaction evidence="2">
        <text>cholest-5-en-3-one = cholest-4-en-3-one</text>
        <dbReference type="Rhea" id="RHEA:32187"/>
        <dbReference type="ChEBI" id="CHEBI:16175"/>
        <dbReference type="ChEBI" id="CHEBI:63906"/>
        <dbReference type="EC" id="5.3.3.1"/>
    </reaction>
    <physiologicalReaction direction="left-to-right" evidence="2">
        <dbReference type="Rhea" id="RHEA:32188"/>
    </physiologicalReaction>
</comment>
<comment type="cofactor">
    <cofactor evidence="1">
        <name>FAD</name>
        <dbReference type="ChEBI" id="CHEBI:57692"/>
    </cofactor>
</comment>
<comment type="pathway">
    <text evidence="2">Steroid metabolism; cholesterol degradation.</text>
</comment>
<comment type="subcellular location">
    <subcellularLocation>
        <location evidence="2">Secreted</location>
    </subcellularLocation>
</comment>
<comment type="similarity">
    <text evidence="4">Belongs to the GMC oxidoreductase family.</text>
</comment>
<gene>
    <name type="primary">choD</name>
    <name type="ordered locus">MT3517</name>
</gene>
<organism>
    <name type="scientific">Mycobacterium tuberculosis (strain CDC 1551 / Oshkosh)</name>
    <dbReference type="NCBI Taxonomy" id="83331"/>
    <lineage>
        <taxon>Bacteria</taxon>
        <taxon>Bacillati</taxon>
        <taxon>Actinomycetota</taxon>
        <taxon>Actinomycetes</taxon>
        <taxon>Mycobacteriales</taxon>
        <taxon>Mycobacteriaceae</taxon>
        <taxon>Mycobacterium</taxon>
        <taxon>Mycobacterium tuberculosis complex</taxon>
    </lineage>
</organism>
<sequence>MKPDYDVLIIGSGFGGSVTALRLTEKGYRVGVLEAGRRFSDEEFAKTSWDLRKFLWAPRLGCYGIQRIHPLRNVMILAGAGVGGGSLNYANTLYVPPEPFFADQQWSHITDWRGELMPHYQQAQRMLGVVQNPTFTDADRIVKEVADEMGFGDTWVPTPVGVFFGPDGTKTPGKTVPDPYFGGAGPARTGCLECGCCMTGCRHGAKNTLVKNYLGLAESAGAQVIPMTTVKGFERRSDGLWEVRTVRTGSWLRRDRRTFTATQLVLAAGTWGTQHLLFKMRDRGRLPGLSKRLGVLTRTNSESIVGAATLKVNPDLDLTHGVAITSSIHPTADTHIEPVRYGKGSNAMGLLQTLMTDGSGPQGTDVPRWRQLLQTASQDPRGTIRMLNPRQWSERTVIALVMQHLDNSITTFTKRGKLGIRWYSSKQGHGEPNPTWIPIGNQVTRRIAAKIDGVAGGTWGELFNIPLTAHFLGGAVIGDDPEHGVIDPYHRVYGYPTLYVVDGAAISANLGVNPSLSIAAQAERAASLWPNKGETDRRPPQGEPYRRLAPIQPAHPVVPADAPGALRWLPIDPVSNAG</sequence>
<protein>
    <recommendedName>
        <fullName evidence="2">Cholesterol oxidase</fullName>
        <ecNumber evidence="2">1.1.3.6</ecNumber>
    </recommendedName>
    <alternativeName>
        <fullName evidence="2">Cholesterol isomerase</fullName>
        <ecNumber evidence="2">5.3.3.1</ecNumber>
    </alternativeName>
</protein>
<keyword id="KW-0153">Cholesterol metabolism</keyword>
<keyword id="KW-0274">FAD</keyword>
<keyword id="KW-0285">Flavoprotein</keyword>
<keyword id="KW-0413">Isomerase</keyword>
<keyword id="KW-0443">Lipid metabolism</keyword>
<keyword id="KW-0560">Oxidoreductase</keyword>
<keyword id="KW-1185">Reference proteome</keyword>
<keyword id="KW-0964">Secreted</keyword>
<keyword id="KW-0753">Steroid metabolism</keyword>
<keyword id="KW-1207">Sterol metabolism</keyword>
<keyword id="KW-0843">Virulence</keyword>
<accession>P9WMV8</accession>
<accession>L0TFA8</accession>
<accession>Q57307</accession>
<accession>Q799Z3</accession>
<accession>Q7D5K5</accession>
<reference key="1">
    <citation type="journal article" date="2002" name="J. Bacteriol.">
        <title>Whole-genome comparison of Mycobacterium tuberculosis clinical and laboratory strains.</title>
        <authorList>
            <person name="Fleischmann R.D."/>
            <person name="Alland D."/>
            <person name="Eisen J.A."/>
            <person name="Carpenter L."/>
            <person name="White O."/>
            <person name="Peterson J.D."/>
            <person name="DeBoy R.T."/>
            <person name="Dodson R.J."/>
            <person name="Gwinn M.L."/>
            <person name="Haft D.H."/>
            <person name="Hickey E.K."/>
            <person name="Kolonay J.F."/>
            <person name="Nelson W.C."/>
            <person name="Umayam L.A."/>
            <person name="Ermolaeva M.D."/>
            <person name="Salzberg S.L."/>
            <person name="Delcher A."/>
            <person name="Utterback T.R."/>
            <person name="Weidman J.F."/>
            <person name="Khouri H.M."/>
            <person name="Gill J."/>
            <person name="Mikula A."/>
            <person name="Bishai W."/>
            <person name="Jacobs W.R. Jr."/>
            <person name="Venter J.C."/>
            <person name="Fraser C.M."/>
        </authorList>
    </citation>
    <scope>NUCLEOTIDE SEQUENCE [LARGE SCALE GENOMIC DNA]</scope>
    <source>
        <strain>CDC 1551 / Oshkosh</strain>
    </source>
</reference>